<sequence>MQITDVRIRKISSEGKMKAIVSVTFDNEFVVHDIKVIEGQNGLFIAMPSRKTPTGEFKDIAHPIVMDSREKIQNEILSAYAKAIEEQDVEE</sequence>
<feature type="chain" id="PRO_1000196496" description="Putative septation protein SpoVG">
    <location>
        <begin position="1"/>
        <end position="91"/>
    </location>
</feature>
<protein>
    <recommendedName>
        <fullName evidence="1">Putative septation protein SpoVG</fullName>
    </recommendedName>
</protein>
<keyword id="KW-0131">Cell cycle</keyword>
<keyword id="KW-0132">Cell division</keyword>
<keyword id="KW-0717">Septation</keyword>
<proteinExistence type="inferred from homology"/>
<dbReference type="EMBL" id="CP001078">
    <property type="protein sequence ID" value="ACD51007.1"/>
    <property type="molecule type" value="Genomic_DNA"/>
</dbReference>
<dbReference type="RefSeq" id="WP_003373862.1">
    <property type="nucleotide sequence ID" value="NC_010723.1"/>
</dbReference>
<dbReference type="SMR" id="B2UXS5"/>
<dbReference type="KEGG" id="cbt:CLH_0139"/>
<dbReference type="HOGENOM" id="CLU_103669_2_1_9"/>
<dbReference type="GO" id="GO:0000917">
    <property type="term" value="P:division septum assembly"/>
    <property type="evidence" value="ECO:0007669"/>
    <property type="project" value="UniProtKB-KW"/>
</dbReference>
<dbReference type="GO" id="GO:0030435">
    <property type="term" value="P:sporulation resulting in formation of a cellular spore"/>
    <property type="evidence" value="ECO:0007669"/>
    <property type="project" value="InterPro"/>
</dbReference>
<dbReference type="Gene3D" id="3.30.1120.40">
    <property type="entry name" value="Stage V sporulation protein G"/>
    <property type="match status" value="1"/>
</dbReference>
<dbReference type="HAMAP" id="MF_00819">
    <property type="entry name" value="SpoVG"/>
    <property type="match status" value="1"/>
</dbReference>
<dbReference type="InterPro" id="IPR007170">
    <property type="entry name" value="SpoVG"/>
</dbReference>
<dbReference type="InterPro" id="IPR036751">
    <property type="entry name" value="SpoVG_sf"/>
</dbReference>
<dbReference type="NCBIfam" id="NF009749">
    <property type="entry name" value="PRK13259.1"/>
    <property type="match status" value="1"/>
</dbReference>
<dbReference type="PANTHER" id="PTHR38429">
    <property type="entry name" value="SEPTATION PROTEIN SPOVG-RELATED"/>
    <property type="match status" value="1"/>
</dbReference>
<dbReference type="PANTHER" id="PTHR38429:SF1">
    <property type="entry name" value="SEPTATION PROTEIN SPOVG-RELATED"/>
    <property type="match status" value="1"/>
</dbReference>
<dbReference type="Pfam" id="PF04026">
    <property type="entry name" value="SpoVG"/>
    <property type="match status" value="1"/>
</dbReference>
<dbReference type="SUPFAM" id="SSF160537">
    <property type="entry name" value="SpoVG-like"/>
    <property type="match status" value="1"/>
</dbReference>
<name>SP5G_CLOBA</name>
<gene>
    <name evidence="1" type="primary">spoVG</name>
    <name type="ordered locus">CLH_0139</name>
</gene>
<comment type="function">
    <text evidence="1">Could be involved in septation.</text>
</comment>
<comment type="similarity">
    <text evidence="1">Belongs to the SpoVG family.</text>
</comment>
<accession>B2UXS5</accession>
<organism>
    <name type="scientific">Clostridium botulinum (strain Alaska E43 / Type E3)</name>
    <dbReference type="NCBI Taxonomy" id="508767"/>
    <lineage>
        <taxon>Bacteria</taxon>
        <taxon>Bacillati</taxon>
        <taxon>Bacillota</taxon>
        <taxon>Clostridia</taxon>
        <taxon>Eubacteriales</taxon>
        <taxon>Clostridiaceae</taxon>
        <taxon>Clostridium</taxon>
    </lineage>
</organism>
<evidence type="ECO:0000255" key="1">
    <source>
        <dbReference type="HAMAP-Rule" id="MF_00819"/>
    </source>
</evidence>
<reference key="1">
    <citation type="submission" date="2008-05" db="EMBL/GenBank/DDBJ databases">
        <title>Complete genome sequence of Clostridium botulinum E3 str. Alaska E43.</title>
        <authorList>
            <person name="Brinkac L.M."/>
            <person name="Brown J.L."/>
            <person name="Bruce D."/>
            <person name="Detter C."/>
            <person name="Munk C."/>
            <person name="Smith L.A."/>
            <person name="Smith T.J."/>
            <person name="Sutton G."/>
            <person name="Brettin T.S."/>
        </authorList>
    </citation>
    <scope>NUCLEOTIDE SEQUENCE [LARGE SCALE GENOMIC DNA]</scope>
    <source>
        <strain>Alaska E43 / Type E3</strain>
    </source>
</reference>